<comment type="function">
    <text evidence="1">Necessary for the splicing of pre-mRNA.</text>
</comment>
<comment type="subcellular location">
    <subcellularLocation>
        <location evidence="1">Nucleus</location>
    </subcellularLocation>
</comment>
<comment type="similarity">
    <text evidence="5">Belongs to the splicing factor SR family.</text>
</comment>
<comment type="sequence caution" evidence="5">
    <conflict type="erroneous termination">
        <sequence resource="EMBL-CDS" id="CAA77132"/>
    </conflict>
    <text>Truncated C-terminus.</text>
</comment>
<sequence length="304" mass="34692">MAEHLASIFGTEKDRVNCPFYFKIGACRHGDRCSRLHNRPTVSPTIVLANMYQRPDMITPGVDAQGQPIDPEKMQEHFEDFYEDIYEELSKFGEVETLNVCDNLADHMIGNVYVQFREEEQAVAAHNALQGRFYSGRPIIVEYSPVTDFREATCRQFEENSCNRGGYCNFMHVKQIGRELRRKLYGGRSRRSHGRSRSPSPRHRRGNRDRDDFRRERDGYRGGGDGYRGGGGGGGGDGYRGGDSYRGGGGGGRRGGGSRYDRYDDGGRRRHGSPPRRARSPVRESSEERRAKIEQWNREREEKP</sequence>
<reference key="1">
    <citation type="journal article" date="1998" name="J. Biol. Chem.">
        <title>Multiple forms of the U2 small nuclear ribonucleoprotein auxiliary factor U2AF subunits expressed in higher plants.</title>
        <authorList>
            <person name="Domon C."/>
            <person name="Lorkovic Z.J."/>
            <person name="Valcarcel J."/>
            <person name="Filipowicz W."/>
        </authorList>
    </citation>
    <scope>NUCLEOTIDE SEQUENCE [MRNA]</scope>
</reference>
<reference key="2">
    <citation type="journal article" date="2005" name="Mol. Genet. Genomics">
        <title>A fine physical map of the rice chromosome 5.</title>
        <authorList>
            <person name="Cheng C.-H."/>
            <person name="Chung M.C."/>
            <person name="Liu S.-M."/>
            <person name="Chen S.-K."/>
            <person name="Kao F.Y."/>
            <person name="Lin S.-J."/>
            <person name="Hsiao S.-H."/>
            <person name="Tseng I.C."/>
            <person name="Hsing Y.-I.C."/>
            <person name="Wu H.-P."/>
            <person name="Chen C.-S."/>
            <person name="Shaw J.-F."/>
            <person name="Wu J."/>
            <person name="Matsumoto T."/>
            <person name="Sasaki T."/>
            <person name="Chen H.-C."/>
            <person name="Chow T.-Y."/>
        </authorList>
    </citation>
    <scope>NUCLEOTIDE SEQUENCE [LARGE SCALE GENOMIC DNA]</scope>
    <source>
        <strain>cv. Nipponbare</strain>
    </source>
</reference>
<reference key="3">
    <citation type="journal article" date="2005" name="Nature">
        <title>The map-based sequence of the rice genome.</title>
        <authorList>
            <consortium name="International rice genome sequencing project (IRGSP)"/>
        </authorList>
    </citation>
    <scope>NUCLEOTIDE SEQUENCE [LARGE SCALE GENOMIC DNA]</scope>
    <source>
        <strain>cv. Nipponbare</strain>
    </source>
</reference>
<reference key="4">
    <citation type="journal article" date="2008" name="Nucleic Acids Res.">
        <title>The rice annotation project database (RAP-DB): 2008 update.</title>
        <authorList>
            <consortium name="The rice annotation project (RAP)"/>
        </authorList>
    </citation>
    <scope>GENOME REANNOTATION</scope>
    <source>
        <strain>cv. Nipponbare</strain>
    </source>
</reference>
<reference key="5">
    <citation type="journal article" date="2013" name="Rice">
        <title>Improvement of the Oryza sativa Nipponbare reference genome using next generation sequence and optical map data.</title>
        <authorList>
            <person name="Kawahara Y."/>
            <person name="de la Bastide M."/>
            <person name="Hamilton J.P."/>
            <person name="Kanamori H."/>
            <person name="McCombie W.R."/>
            <person name="Ouyang S."/>
            <person name="Schwartz D.C."/>
            <person name="Tanaka T."/>
            <person name="Wu J."/>
            <person name="Zhou S."/>
            <person name="Childs K.L."/>
            <person name="Davidson R.M."/>
            <person name="Lin H."/>
            <person name="Quesada-Ocampo L."/>
            <person name="Vaillancourt B."/>
            <person name="Sakai H."/>
            <person name="Lee S.S."/>
            <person name="Kim J."/>
            <person name="Numa H."/>
            <person name="Itoh T."/>
            <person name="Buell C.R."/>
            <person name="Matsumoto T."/>
        </authorList>
    </citation>
    <scope>GENOME REANNOTATION</scope>
    <source>
        <strain>cv. Nipponbare</strain>
    </source>
</reference>
<reference key="6">
    <citation type="journal article" date="2005" name="PLoS Biol.">
        <title>The genomes of Oryza sativa: a history of duplications.</title>
        <authorList>
            <person name="Yu J."/>
            <person name="Wang J."/>
            <person name="Lin W."/>
            <person name="Li S."/>
            <person name="Li H."/>
            <person name="Zhou J."/>
            <person name="Ni P."/>
            <person name="Dong W."/>
            <person name="Hu S."/>
            <person name="Zeng C."/>
            <person name="Zhang J."/>
            <person name="Zhang Y."/>
            <person name="Li R."/>
            <person name="Xu Z."/>
            <person name="Li S."/>
            <person name="Li X."/>
            <person name="Zheng H."/>
            <person name="Cong L."/>
            <person name="Lin L."/>
            <person name="Yin J."/>
            <person name="Geng J."/>
            <person name="Li G."/>
            <person name="Shi J."/>
            <person name="Liu J."/>
            <person name="Lv H."/>
            <person name="Li J."/>
            <person name="Wang J."/>
            <person name="Deng Y."/>
            <person name="Ran L."/>
            <person name="Shi X."/>
            <person name="Wang X."/>
            <person name="Wu Q."/>
            <person name="Li C."/>
            <person name="Ren X."/>
            <person name="Wang J."/>
            <person name="Wang X."/>
            <person name="Li D."/>
            <person name="Liu D."/>
            <person name="Zhang X."/>
            <person name="Ji Z."/>
            <person name="Zhao W."/>
            <person name="Sun Y."/>
            <person name="Zhang Z."/>
            <person name="Bao J."/>
            <person name="Han Y."/>
            <person name="Dong L."/>
            <person name="Ji J."/>
            <person name="Chen P."/>
            <person name="Wu S."/>
            <person name="Liu J."/>
            <person name="Xiao Y."/>
            <person name="Bu D."/>
            <person name="Tan J."/>
            <person name="Yang L."/>
            <person name="Ye C."/>
            <person name="Zhang J."/>
            <person name="Xu J."/>
            <person name="Zhou Y."/>
            <person name="Yu Y."/>
            <person name="Zhang B."/>
            <person name="Zhuang S."/>
            <person name="Wei H."/>
            <person name="Liu B."/>
            <person name="Lei M."/>
            <person name="Yu H."/>
            <person name="Li Y."/>
            <person name="Xu H."/>
            <person name="Wei S."/>
            <person name="He X."/>
            <person name="Fang L."/>
            <person name="Zhang Z."/>
            <person name="Zhang Y."/>
            <person name="Huang X."/>
            <person name="Su Z."/>
            <person name="Tong W."/>
            <person name="Li J."/>
            <person name="Tong Z."/>
            <person name="Li S."/>
            <person name="Ye J."/>
            <person name="Wang L."/>
            <person name="Fang L."/>
            <person name="Lei T."/>
            <person name="Chen C.-S."/>
            <person name="Chen H.-C."/>
            <person name="Xu Z."/>
            <person name="Li H."/>
            <person name="Huang H."/>
            <person name="Zhang F."/>
            <person name="Xu H."/>
            <person name="Li N."/>
            <person name="Zhao C."/>
            <person name="Li S."/>
            <person name="Dong L."/>
            <person name="Huang Y."/>
            <person name="Li L."/>
            <person name="Xi Y."/>
            <person name="Qi Q."/>
            <person name="Li W."/>
            <person name="Zhang B."/>
            <person name="Hu W."/>
            <person name="Zhang Y."/>
            <person name="Tian X."/>
            <person name="Jiao Y."/>
            <person name="Liang X."/>
            <person name="Jin J."/>
            <person name="Gao L."/>
            <person name="Zheng W."/>
            <person name="Hao B."/>
            <person name="Liu S.-M."/>
            <person name="Wang W."/>
            <person name="Yuan L."/>
            <person name="Cao M."/>
            <person name="McDermott J."/>
            <person name="Samudrala R."/>
            <person name="Wang J."/>
            <person name="Wong G.K.-S."/>
            <person name="Yang H."/>
        </authorList>
    </citation>
    <scope>NUCLEOTIDE SEQUENCE [LARGE SCALE GENOMIC DNA]</scope>
    <source>
        <strain>cv. Nipponbare</strain>
    </source>
</reference>
<reference key="7">
    <citation type="journal article" date="2003" name="Science">
        <title>Collection, mapping, and annotation of over 28,000 cDNA clones from japonica rice.</title>
        <authorList>
            <consortium name="The rice full-length cDNA consortium"/>
        </authorList>
    </citation>
    <scope>NUCLEOTIDE SEQUENCE [LARGE SCALE MRNA]</scope>
    <source>
        <strain>cv. Nipponbare</strain>
    </source>
</reference>
<reference key="8">
    <citation type="journal article" date="2008" name="BMC Genomics">
        <title>Genome-wide analysis of CCCH zinc finger family in Arabidopsis and rice.</title>
        <authorList>
            <person name="Wang D."/>
            <person name="Guo Y."/>
            <person name="Wu C."/>
            <person name="Yang G."/>
            <person name="Li Y."/>
            <person name="Zheng C."/>
        </authorList>
    </citation>
    <scope>NOMENCLATURE</scope>
</reference>
<organism>
    <name type="scientific">Oryza sativa subsp. japonica</name>
    <name type="common">Rice</name>
    <dbReference type="NCBI Taxonomy" id="39947"/>
    <lineage>
        <taxon>Eukaryota</taxon>
        <taxon>Viridiplantae</taxon>
        <taxon>Streptophyta</taxon>
        <taxon>Embryophyta</taxon>
        <taxon>Tracheophyta</taxon>
        <taxon>Spermatophyta</taxon>
        <taxon>Magnoliopsida</taxon>
        <taxon>Liliopsida</taxon>
        <taxon>Poales</taxon>
        <taxon>Poaceae</taxon>
        <taxon>BOP clade</taxon>
        <taxon>Oryzoideae</taxon>
        <taxon>Oryzeae</taxon>
        <taxon>Oryzinae</taxon>
        <taxon>Oryza</taxon>
        <taxon>Oryza sativa</taxon>
    </lineage>
</organism>
<gene>
    <name type="primary">U2AF35B</name>
    <name type="ordered locus">Os05g0564200</name>
    <name type="ordered locus">LOC_Os05g48960</name>
    <name type="ORF">OsJ_018769</name>
    <name evidence="6" type="ORF">OsJ_19555</name>
    <name type="ORF">OSJNBb0053D02.11</name>
</gene>
<evidence type="ECO:0000250" key="1"/>
<evidence type="ECO:0000255" key="2">
    <source>
        <dbReference type="PROSITE-ProRule" id="PRU00176"/>
    </source>
</evidence>
<evidence type="ECO:0000255" key="3">
    <source>
        <dbReference type="PROSITE-ProRule" id="PRU00723"/>
    </source>
</evidence>
<evidence type="ECO:0000256" key="4">
    <source>
        <dbReference type="SAM" id="MobiDB-lite"/>
    </source>
</evidence>
<evidence type="ECO:0000305" key="5"/>
<evidence type="ECO:0000312" key="6">
    <source>
        <dbReference type="EMBL" id="EEE64700.1"/>
    </source>
</evidence>
<feature type="chain" id="PRO_0000346799" description="Splicing factor U2af small subunit B">
    <location>
        <begin position="1"/>
        <end position="304"/>
    </location>
</feature>
<feature type="domain" description="RRM" evidence="2">
    <location>
        <begin position="44"/>
        <end position="146"/>
    </location>
</feature>
<feature type="zinc finger region" description="C3H1-type 1" evidence="3">
    <location>
        <begin position="12"/>
        <end position="40"/>
    </location>
</feature>
<feature type="zinc finger region" description="C3H1-type 2" evidence="3">
    <location>
        <begin position="148"/>
        <end position="175"/>
    </location>
</feature>
<feature type="region of interest" description="Disordered" evidence="4">
    <location>
        <begin position="184"/>
        <end position="304"/>
    </location>
</feature>
<feature type="compositionally biased region" description="Basic residues" evidence="4">
    <location>
        <begin position="184"/>
        <end position="207"/>
    </location>
</feature>
<feature type="compositionally biased region" description="Basic and acidic residues" evidence="4">
    <location>
        <begin position="208"/>
        <end position="220"/>
    </location>
</feature>
<feature type="compositionally biased region" description="Gly residues" evidence="4">
    <location>
        <begin position="221"/>
        <end position="258"/>
    </location>
</feature>
<feature type="compositionally biased region" description="Basic residues" evidence="4">
    <location>
        <begin position="268"/>
        <end position="280"/>
    </location>
</feature>
<feature type="compositionally biased region" description="Basic and acidic residues" evidence="4">
    <location>
        <begin position="281"/>
        <end position="304"/>
    </location>
</feature>
<proteinExistence type="evidence at transcript level"/>
<protein>
    <recommendedName>
        <fullName>Splicing factor U2af small subunit B</fullName>
    </recommendedName>
    <alternativeName>
        <fullName>U2 auxiliary factor 35 kDa subunit B</fullName>
    </alternativeName>
    <alternativeName>
        <fullName>U2 small nuclear ribonucleoprotein auxiliary factor small subunit B</fullName>
        <shortName>U2 snRNP auxiliary factor small subunit B</shortName>
    </alternativeName>
    <alternativeName>
        <fullName>Zinc finger CCCH domain-containing protein 38</fullName>
        <shortName>OsC3H38</shortName>
    </alternativeName>
</protein>
<name>U2AFB_ORYSJ</name>
<dbReference type="EMBL" id="Y18348">
    <property type="protein sequence ID" value="CAA77132.1"/>
    <property type="status" value="ALT_SEQ"/>
    <property type="molecule type" value="mRNA"/>
</dbReference>
<dbReference type="EMBL" id="AC124143">
    <property type="protein sequence ID" value="AAT77399.1"/>
    <property type="molecule type" value="Genomic_DNA"/>
</dbReference>
<dbReference type="EMBL" id="AP008211">
    <property type="protein sequence ID" value="BAF18245.1"/>
    <property type="molecule type" value="Genomic_DNA"/>
</dbReference>
<dbReference type="EMBL" id="AP014961">
    <property type="protein sequence ID" value="BAS95352.1"/>
    <property type="molecule type" value="Genomic_DNA"/>
</dbReference>
<dbReference type="EMBL" id="CM000142">
    <property type="protein sequence ID" value="EAZ35286.1"/>
    <property type="molecule type" value="Genomic_DNA"/>
</dbReference>
<dbReference type="EMBL" id="CM000142">
    <property type="protein sequence ID" value="EEE64700.1"/>
    <property type="molecule type" value="Genomic_DNA"/>
</dbReference>
<dbReference type="EMBL" id="AK070198">
    <property type="protein sequence ID" value="BAG91824.1"/>
    <property type="molecule type" value="mRNA"/>
</dbReference>
<dbReference type="EMBL" id="AK104767">
    <property type="protein sequence ID" value="BAG96940.1"/>
    <property type="molecule type" value="mRNA"/>
</dbReference>
<dbReference type="RefSeq" id="XP_015639721.1">
    <property type="nucleotide sequence ID" value="XM_015784235.1"/>
</dbReference>
<dbReference type="RefSeq" id="XP_015639722.1">
    <property type="nucleotide sequence ID" value="XM_015784236.1"/>
</dbReference>
<dbReference type="SMR" id="Q6AUG0"/>
<dbReference type="FunCoup" id="Q6AUG0">
    <property type="interactions" value="2301"/>
</dbReference>
<dbReference type="STRING" id="39947.Q6AUG0"/>
<dbReference type="PaxDb" id="39947-Q6AUG0"/>
<dbReference type="EnsemblPlants" id="Os05t0564200-01">
    <property type="protein sequence ID" value="Os05t0564200-01"/>
    <property type="gene ID" value="Os05g0564200"/>
</dbReference>
<dbReference type="Gramene" id="Os05t0564200-01">
    <property type="protein sequence ID" value="Os05t0564200-01"/>
    <property type="gene ID" value="Os05g0564200"/>
</dbReference>
<dbReference type="KEGG" id="dosa:Os05g0564200"/>
<dbReference type="eggNOG" id="KOG2202">
    <property type="taxonomic scope" value="Eukaryota"/>
</dbReference>
<dbReference type="HOGENOM" id="CLU_059852_2_1_1"/>
<dbReference type="InParanoid" id="Q6AUG0"/>
<dbReference type="OMA" id="NLYRNPH"/>
<dbReference type="OrthoDB" id="423462at2759"/>
<dbReference type="Proteomes" id="UP000000763">
    <property type="component" value="Chromosome 5"/>
</dbReference>
<dbReference type="Proteomes" id="UP000007752">
    <property type="component" value="Chromosome 5"/>
</dbReference>
<dbReference type="Proteomes" id="UP000059680">
    <property type="component" value="Chromosome 5"/>
</dbReference>
<dbReference type="GO" id="GO:0005681">
    <property type="term" value="C:spliceosomal complex"/>
    <property type="evidence" value="ECO:0000318"/>
    <property type="project" value="GO_Central"/>
</dbReference>
<dbReference type="GO" id="GO:0089701">
    <property type="term" value="C:U2AF complex"/>
    <property type="evidence" value="ECO:0000318"/>
    <property type="project" value="GO_Central"/>
</dbReference>
<dbReference type="GO" id="GO:0003677">
    <property type="term" value="F:DNA binding"/>
    <property type="evidence" value="ECO:0007669"/>
    <property type="project" value="UniProtKB-KW"/>
</dbReference>
<dbReference type="GO" id="GO:0030628">
    <property type="term" value="F:pre-mRNA 3'-splice site binding"/>
    <property type="evidence" value="ECO:0000318"/>
    <property type="project" value="GO_Central"/>
</dbReference>
<dbReference type="GO" id="GO:0008270">
    <property type="term" value="F:zinc ion binding"/>
    <property type="evidence" value="ECO:0007669"/>
    <property type="project" value="UniProtKB-KW"/>
</dbReference>
<dbReference type="GO" id="GO:0000398">
    <property type="term" value="P:mRNA splicing, via spliceosome"/>
    <property type="evidence" value="ECO:0000318"/>
    <property type="project" value="GO_Central"/>
</dbReference>
<dbReference type="CDD" id="cd12539">
    <property type="entry name" value="RRM_U2AF35B"/>
    <property type="match status" value="1"/>
</dbReference>
<dbReference type="FunFam" id="3.30.70.330:FF:000122">
    <property type="entry name" value="Splicing factor U2AF small subunit"/>
    <property type="match status" value="1"/>
</dbReference>
<dbReference type="Gene3D" id="3.30.70.330">
    <property type="match status" value="1"/>
</dbReference>
<dbReference type="InterPro" id="IPR012677">
    <property type="entry name" value="Nucleotide-bd_a/b_plait_sf"/>
</dbReference>
<dbReference type="InterPro" id="IPR035979">
    <property type="entry name" value="RBD_domain_sf"/>
</dbReference>
<dbReference type="InterPro" id="IPR000504">
    <property type="entry name" value="RRM_dom"/>
</dbReference>
<dbReference type="InterPro" id="IPR009145">
    <property type="entry name" value="U2AF_small"/>
</dbReference>
<dbReference type="InterPro" id="IPR000571">
    <property type="entry name" value="Znf_CCCH"/>
</dbReference>
<dbReference type="PANTHER" id="PTHR12620">
    <property type="entry name" value="U2 SNRNP AUXILIARY FACTOR, SMALL SUBUNIT"/>
    <property type="match status" value="1"/>
</dbReference>
<dbReference type="Pfam" id="PF00076">
    <property type="entry name" value="RRM_1"/>
    <property type="match status" value="1"/>
</dbReference>
<dbReference type="Pfam" id="PF00642">
    <property type="entry name" value="zf-CCCH"/>
    <property type="match status" value="2"/>
</dbReference>
<dbReference type="PRINTS" id="PR01848">
    <property type="entry name" value="U2AUXFACTOR"/>
</dbReference>
<dbReference type="SMART" id="SM00356">
    <property type="entry name" value="ZnF_C3H1"/>
    <property type="match status" value="2"/>
</dbReference>
<dbReference type="SUPFAM" id="SSF54928">
    <property type="entry name" value="RNA-binding domain, RBD"/>
    <property type="match status" value="1"/>
</dbReference>
<dbReference type="PROSITE" id="PS50102">
    <property type="entry name" value="RRM"/>
    <property type="match status" value="1"/>
</dbReference>
<dbReference type="PROSITE" id="PS50103">
    <property type="entry name" value="ZF_C3H1"/>
    <property type="match status" value="2"/>
</dbReference>
<accession>Q6AUG0</accession>
<accession>B7EHH7</accession>
<accession>Q9ZQW9</accession>
<keyword id="KW-0238">DNA-binding</keyword>
<keyword id="KW-0479">Metal-binding</keyword>
<keyword id="KW-0507">mRNA processing</keyword>
<keyword id="KW-0508">mRNA splicing</keyword>
<keyword id="KW-0539">Nucleus</keyword>
<keyword id="KW-1185">Reference proteome</keyword>
<keyword id="KW-0677">Repeat</keyword>
<keyword id="KW-0694">RNA-binding</keyword>
<keyword id="KW-0862">Zinc</keyword>
<keyword id="KW-0863">Zinc-finger</keyword>